<reference key="1">
    <citation type="journal article" date="2005" name="Proc. Natl. Acad. Sci. U.S.A.">
        <title>The psychrophilic lifestyle as revealed by the genome sequence of Colwellia psychrerythraea 34H through genomic and proteomic analyses.</title>
        <authorList>
            <person name="Methe B.A."/>
            <person name="Nelson K.E."/>
            <person name="Deming J.W."/>
            <person name="Momen B."/>
            <person name="Melamud E."/>
            <person name="Zhang X."/>
            <person name="Moult J."/>
            <person name="Madupu R."/>
            <person name="Nelson W.C."/>
            <person name="Dodson R.J."/>
            <person name="Brinkac L.M."/>
            <person name="Daugherty S.C."/>
            <person name="Durkin A.S."/>
            <person name="DeBoy R.T."/>
            <person name="Kolonay J.F."/>
            <person name="Sullivan S.A."/>
            <person name="Zhou L."/>
            <person name="Davidsen T.M."/>
            <person name="Wu M."/>
            <person name="Huston A.L."/>
            <person name="Lewis M."/>
            <person name="Weaver B."/>
            <person name="Weidman J.F."/>
            <person name="Khouri H."/>
            <person name="Utterback T.R."/>
            <person name="Feldblyum T.V."/>
            <person name="Fraser C.M."/>
        </authorList>
    </citation>
    <scope>NUCLEOTIDE SEQUENCE [LARGE SCALE GENOMIC DNA]</scope>
    <source>
        <strain>34H / ATCC BAA-681</strain>
    </source>
</reference>
<gene>
    <name evidence="1" type="primary">pth</name>
    <name type="ordered locus">CPS_3559</name>
</gene>
<keyword id="KW-0963">Cytoplasm</keyword>
<keyword id="KW-0378">Hydrolase</keyword>
<keyword id="KW-0694">RNA-binding</keyword>
<keyword id="KW-0820">tRNA-binding</keyword>
<dbReference type="EC" id="3.1.1.29" evidence="1"/>
<dbReference type="EMBL" id="CP000083">
    <property type="protein sequence ID" value="AAZ25055.1"/>
    <property type="molecule type" value="Genomic_DNA"/>
</dbReference>
<dbReference type="RefSeq" id="WP_011044319.1">
    <property type="nucleotide sequence ID" value="NC_003910.7"/>
</dbReference>
<dbReference type="SMR" id="Q47Y87"/>
<dbReference type="STRING" id="167879.CPS_3559"/>
<dbReference type="KEGG" id="cps:CPS_3559"/>
<dbReference type="eggNOG" id="COG0193">
    <property type="taxonomic scope" value="Bacteria"/>
</dbReference>
<dbReference type="HOGENOM" id="CLU_062456_3_1_6"/>
<dbReference type="Proteomes" id="UP000000547">
    <property type="component" value="Chromosome"/>
</dbReference>
<dbReference type="GO" id="GO:0005737">
    <property type="term" value="C:cytoplasm"/>
    <property type="evidence" value="ECO:0007669"/>
    <property type="project" value="UniProtKB-SubCell"/>
</dbReference>
<dbReference type="GO" id="GO:0004045">
    <property type="term" value="F:peptidyl-tRNA hydrolase activity"/>
    <property type="evidence" value="ECO:0007669"/>
    <property type="project" value="UniProtKB-UniRule"/>
</dbReference>
<dbReference type="GO" id="GO:0000049">
    <property type="term" value="F:tRNA binding"/>
    <property type="evidence" value="ECO:0007669"/>
    <property type="project" value="UniProtKB-UniRule"/>
</dbReference>
<dbReference type="GO" id="GO:0006515">
    <property type="term" value="P:protein quality control for misfolded or incompletely synthesized proteins"/>
    <property type="evidence" value="ECO:0007669"/>
    <property type="project" value="UniProtKB-UniRule"/>
</dbReference>
<dbReference type="GO" id="GO:0072344">
    <property type="term" value="P:rescue of stalled ribosome"/>
    <property type="evidence" value="ECO:0007669"/>
    <property type="project" value="UniProtKB-UniRule"/>
</dbReference>
<dbReference type="CDD" id="cd00462">
    <property type="entry name" value="PTH"/>
    <property type="match status" value="1"/>
</dbReference>
<dbReference type="FunFam" id="3.40.50.1470:FF:000001">
    <property type="entry name" value="Peptidyl-tRNA hydrolase"/>
    <property type="match status" value="1"/>
</dbReference>
<dbReference type="Gene3D" id="3.40.50.1470">
    <property type="entry name" value="Peptidyl-tRNA hydrolase"/>
    <property type="match status" value="1"/>
</dbReference>
<dbReference type="HAMAP" id="MF_00083">
    <property type="entry name" value="Pept_tRNA_hydro_bact"/>
    <property type="match status" value="1"/>
</dbReference>
<dbReference type="InterPro" id="IPR001328">
    <property type="entry name" value="Pept_tRNA_hydro"/>
</dbReference>
<dbReference type="InterPro" id="IPR018171">
    <property type="entry name" value="Pept_tRNA_hydro_CS"/>
</dbReference>
<dbReference type="InterPro" id="IPR036416">
    <property type="entry name" value="Pept_tRNA_hydro_sf"/>
</dbReference>
<dbReference type="NCBIfam" id="TIGR00447">
    <property type="entry name" value="pth"/>
    <property type="match status" value="1"/>
</dbReference>
<dbReference type="PANTHER" id="PTHR17224">
    <property type="entry name" value="PEPTIDYL-TRNA HYDROLASE"/>
    <property type="match status" value="1"/>
</dbReference>
<dbReference type="PANTHER" id="PTHR17224:SF1">
    <property type="entry name" value="PEPTIDYL-TRNA HYDROLASE"/>
    <property type="match status" value="1"/>
</dbReference>
<dbReference type="Pfam" id="PF01195">
    <property type="entry name" value="Pept_tRNA_hydro"/>
    <property type="match status" value="1"/>
</dbReference>
<dbReference type="SUPFAM" id="SSF53178">
    <property type="entry name" value="Peptidyl-tRNA hydrolase-like"/>
    <property type="match status" value="1"/>
</dbReference>
<dbReference type="PROSITE" id="PS01195">
    <property type="entry name" value="PEPT_TRNA_HYDROL_1"/>
    <property type="match status" value="1"/>
</dbReference>
<dbReference type="PROSITE" id="PS01196">
    <property type="entry name" value="PEPT_TRNA_HYDROL_2"/>
    <property type="match status" value="1"/>
</dbReference>
<evidence type="ECO:0000255" key="1">
    <source>
        <dbReference type="HAMAP-Rule" id="MF_00083"/>
    </source>
</evidence>
<feature type="chain" id="PRO_0000264024" description="Peptidyl-tRNA hydrolase">
    <location>
        <begin position="1"/>
        <end position="194"/>
    </location>
</feature>
<feature type="active site" description="Proton acceptor" evidence="1">
    <location>
        <position position="21"/>
    </location>
</feature>
<feature type="binding site" evidence="1">
    <location>
        <position position="16"/>
    </location>
    <ligand>
        <name>tRNA</name>
        <dbReference type="ChEBI" id="CHEBI:17843"/>
    </ligand>
</feature>
<feature type="binding site" evidence="1">
    <location>
        <position position="67"/>
    </location>
    <ligand>
        <name>tRNA</name>
        <dbReference type="ChEBI" id="CHEBI:17843"/>
    </ligand>
</feature>
<feature type="binding site" evidence="1">
    <location>
        <position position="69"/>
    </location>
    <ligand>
        <name>tRNA</name>
        <dbReference type="ChEBI" id="CHEBI:17843"/>
    </ligand>
</feature>
<feature type="binding site" evidence="1">
    <location>
        <position position="115"/>
    </location>
    <ligand>
        <name>tRNA</name>
        <dbReference type="ChEBI" id="CHEBI:17843"/>
    </ligand>
</feature>
<feature type="site" description="Discriminates between blocked and unblocked aminoacyl-tRNA" evidence="1">
    <location>
        <position position="11"/>
    </location>
</feature>
<feature type="site" description="Stabilizes the basic form of H active site to accept a proton" evidence="1">
    <location>
        <position position="94"/>
    </location>
</feature>
<sequence>MTIKLIAGLGNPGPEYSKTRHNAGVWFVEELARSHNISLRPEKKYSGLYGKGLIAGNLVHLLIPTTFMNRSGQAVAPLANFYKISVDEILVAHDELDMLPGVCKIKKGGGHGGHNGLRDIIDRMANNKDFYRLRIGIDHPGHRDKVTGHVLGKAPSAEQAKIEQAIDEASRCLDIWLKDDLKKAQNRLHSFKAE</sequence>
<comment type="function">
    <text evidence="1">Hydrolyzes ribosome-free peptidyl-tRNAs (with 1 or more amino acids incorporated), which drop off the ribosome during protein synthesis, or as a result of ribosome stalling.</text>
</comment>
<comment type="function">
    <text evidence="1">Catalyzes the release of premature peptidyl moieties from peptidyl-tRNA molecules trapped in stalled 50S ribosomal subunits, and thus maintains levels of free tRNAs and 50S ribosomes.</text>
</comment>
<comment type="catalytic activity">
    <reaction evidence="1">
        <text>an N-acyl-L-alpha-aminoacyl-tRNA + H2O = an N-acyl-L-amino acid + a tRNA + H(+)</text>
        <dbReference type="Rhea" id="RHEA:54448"/>
        <dbReference type="Rhea" id="RHEA-COMP:10123"/>
        <dbReference type="Rhea" id="RHEA-COMP:13883"/>
        <dbReference type="ChEBI" id="CHEBI:15377"/>
        <dbReference type="ChEBI" id="CHEBI:15378"/>
        <dbReference type="ChEBI" id="CHEBI:59874"/>
        <dbReference type="ChEBI" id="CHEBI:78442"/>
        <dbReference type="ChEBI" id="CHEBI:138191"/>
        <dbReference type="EC" id="3.1.1.29"/>
    </reaction>
</comment>
<comment type="subunit">
    <text evidence="1">Monomer.</text>
</comment>
<comment type="subcellular location">
    <subcellularLocation>
        <location evidence="1">Cytoplasm</location>
    </subcellularLocation>
</comment>
<comment type="similarity">
    <text evidence="1">Belongs to the PTH family.</text>
</comment>
<protein>
    <recommendedName>
        <fullName evidence="1">Peptidyl-tRNA hydrolase</fullName>
        <shortName evidence="1">Pth</shortName>
        <ecNumber evidence="1">3.1.1.29</ecNumber>
    </recommendedName>
</protein>
<organism>
    <name type="scientific">Colwellia psychrerythraea (strain 34H / ATCC BAA-681)</name>
    <name type="common">Vibrio psychroerythus</name>
    <dbReference type="NCBI Taxonomy" id="167879"/>
    <lineage>
        <taxon>Bacteria</taxon>
        <taxon>Pseudomonadati</taxon>
        <taxon>Pseudomonadota</taxon>
        <taxon>Gammaproteobacteria</taxon>
        <taxon>Alteromonadales</taxon>
        <taxon>Colwelliaceae</taxon>
        <taxon>Colwellia</taxon>
    </lineage>
</organism>
<proteinExistence type="inferred from homology"/>
<name>PTH_COLP3</name>
<accession>Q47Y87</accession>